<protein>
    <recommendedName>
        <fullName evidence="5">Meiosis-specific protein ASY3</fullName>
    </recommendedName>
    <alternativeName>
        <fullName evidence="4">Protein ASYNAPTIC 3</fullName>
        <shortName evidence="4">AtASY3</shortName>
    </alternativeName>
</protein>
<proteinExistence type="evidence at protein level"/>
<feature type="chain" id="PRO_0000438698" description="Meiosis-specific protein ASY3">
    <location>
        <begin position="1"/>
        <end position="793"/>
    </location>
</feature>
<feature type="region of interest" description="Disordered" evidence="2">
    <location>
        <begin position="1"/>
        <end position="40"/>
    </location>
</feature>
<feature type="region of interest" description="Disordered" evidence="2">
    <location>
        <begin position="58"/>
        <end position="97"/>
    </location>
</feature>
<feature type="region of interest" description="Disordered" evidence="2">
    <location>
        <begin position="110"/>
        <end position="287"/>
    </location>
</feature>
<feature type="region of interest" description="Disordered" evidence="2">
    <location>
        <begin position="305"/>
        <end position="586"/>
    </location>
</feature>
<feature type="coiled-coil region" evidence="1">
    <location>
        <begin position="682"/>
        <end position="745"/>
    </location>
</feature>
<feature type="compositionally biased region" description="Polar residues" evidence="2">
    <location>
        <begin position="7"/>
        <end position="19"/>
    </location>
</feature>
<feature type="compositionally biased region" description="Basic and acidic residues" evidence="2">
    <location>
        <begin position="60"/>
        <end position="70"/>
    </location>
</feature>
<feature type="compositionally biased region" description="Polar residues" evidence="2">
    <location>
        <begin position="72"/>
        <end position="86"/>
    </location>
</feature>
<feature type="compositionally biased region" description="Low complexity" evidence="2">
    <location>
        <begin position="110"/>
        <end position="122"/>
    </location>
</feature>
<feature type="compositionally biased region" description="Polar residues" evidence="2">
    <location>
        <begin position="131"/>
        <end position="142"/>
    </location>
</feature>
<feature type="compositionally biased region" description="Basic and acidic residues" evidence="2">
    <location>
        <begin position="151"/>
        <end position="165"/>
    </location>
</feature>
<feature type="compositionally biased region" description="Basic and acidic residues" evidence="2">
    <location>
        <begin position="177"/>
        <end position="187"/>
    </location>
</feature>
<feature type="compositionally biased region" description="Polar residues" evidence="2">
    <location>
        <begin position="209"/>
        <end position="219"/>
    </location>
</feature>
<feature type="compositionally biased region" description="Basic and acidic residues" evidence="2">
    <location>
        <begin position="221"/>
        <end position="248"/>
    </location>
</feature>
<feature type="compositionally biased region" description="Basic residues" evidence="2">
    <location>
        <begin position="322"/>
        <end position="341"/>
    </location>
</feature>
<feature type="compositionally biased region" description="Basic and acidic residues" evidence="2">
    <location>
        <begin position="342"/>
        <end position="354"/>
    </location>
</feature>
<feature type="compositionally biased region" description="Basic and acidic residues" evidence="2">
    <location>
        <begin position="363"/>
        <end position="385"/>
    </location>
</feature>
<feature type="compositionally biased region" description="Basic and acidic residues" evidence="2">
    <location>
        <begin position="392"/>
        <end position="407"/>
    </location>
</feature>
<feature type="compositionally biased region" description="Basic and acidic residues" evidence="2">
    <location>
        <begin position="424"/>
        <end position="441"/>
    </location>
</feature>
<feature type="compositionally biased region" description="Low complexity" evidence="2">
    <location>
        <begin position="455"/>
        <end position="470"/>
    </location>
</feature>
<feature type="compositionally biased region" description="Low complexity" evidence="2">
    <location>
        <begin position="491"/>
        <end position="502"/>
    </location>
</feature>
<feature type="compositionally biased region" description="Basic and acidic residues" evidence="2">
    <location>
        <begin position="505"/>
        <end position="527"/>
    </location>
</feature>
<feature type="compositionally biased region" description="Basic and acidic residues" evidence="2">
    <location>
        <begin position="541"/>
        <end position="553"/>
    </location>
</feature>
<feature type="splice variant" id="VSP_058718" description="In isoform 2.">
    <original>DFLEK</original>
    <variation>VTFIN</variation>
    <location>
        <begin position="512"/>
        <end position="516"/>
    </location>
</feature>
<feature type="splice variant" id="VSP_058719" description="In isoform 2.">
    <location>
        <begin position="517"/>
        <end position="793"/>
    </location>
</feature>
<feature type="sequence conflict" description="In Ref. 3; AAL84940." evidence="5" ref="3">
    <original>R</original>
    <variation>G</variation>
    <location>
        <position position="262"/>
    </location>
</feature>
<comment type="function">
    <text evidence="3">Required for normal meiosis in male and female gametophytes. Acts with ASY1 at the interface between the developing chromosome axes and the recombination machinery to ensure interhomolog recombination. Required for synaptonemal complex formation during meiosis.</text>
</comment>
<comment type="subunit">
    <text evidence="3">Interacts with ASY1.</text>
</comment>
<comment type="subcellular location">
    <subcellularLocation>
        <location evidence="3">Chromosome</location>
    </subcellularLocation>
    <subcellularLocation>
        <location evidence="3">Nucleus</location>
    </subcellularLocation>
    <text evidence="3">During interphase-early leptotene, distributed as numerous punctuate foci throughout the chromatin. At zygotene and pachytene, shows a continuous localization along chromosomal axes.</text>
</comment>
<comment type="alternative products">
    <event type="alternative splicing"/>
    <isoform>
        <id>Q0WR66-1</id>
        <name>1</name>
        <sequence type="displayed"/>
    </isoform>
    <isoform>
        <id>Q0WR66-2</id>
        <name>2</name>
        <sequence type="described" ref="VSP_058718 VSP_058719"/>
    </isoform>
</comment>
<sequence length="793" mass="87996">MSDYRSFGSNYHPSSQSRKISIGVMADSQPKRNLVPDKDDGDVIARVEKLKSATVTELQANKKEKSDLAAKQRNSAQVTGHVTSPWRSPRSSHRKLGTLESVLCKQTSSLSGSKGLNKGLNGAHQTPARESFQNCPISSPQHSLGELNGGRNDRVMDRSPERMEEPPSAVLQQKVASQREKMDKPGKETNGTTDVLRSKLWEILGKASPANNEDVNSETPEVEKTNFKLSQDKGSNDDPLIKPRHNSDSIETDSESPENATRRPVTRSLLQRRVGAKGVQKKTKAGANLGRKCTEQVNSVFSFEEGLRGKIGTAVNSSVMPKKQRGRRKNTVVKCRKAHSRKKDEADWSRKEASKSNTPPRSESTETGKRSSSSDKKGSSHDLHPQSKARKQKPDISTREGDFHPSPEAEAAALPEMSQGLSKNGDKHERPSNIFREKSVEPENEFQSPTFGYKAPISSPSPCCSPEASPLQPRNISPTLDETETPIFSFGTKKTSQGTTGQASDTEKRLPDFLEKKRDYSFRRESSPEPNEDLVLSDPSSDERDSDGSREDSPVLGHNISPEERETANWTNERSMLGPSSVKRNSNLKGIGRVVLSPPSPLSKGIDKTDSFQHCSEMDEDEDEGLGRAVALFAMALQNFERKLKSAAEKKSSEIIASVSEEIHLELENIKSHIITEAGKTSNLAKTKRKHAETRLQEQEEKMRMIHEKFKDDVSHHLEDFKSTIEELEANQSELKGSIKKQRTSHQKLIAHFEGGIETKLDDATKRIDSVNKSARGKMLQLKMIVAECLRDD</sequence>
<dbReference type="EMBL" id="AC004411">
    <property type="protein sequence ID" value="AAC34237.1"/>
    <property type="molecule type" value="Genomic_DNA"/>
</dbReference>
<dbReference type="EMBL" id="CP002685">
    <property type="protein sequence ID" value="AEC10780.1"/>
    <property type="molecule type" value="Genomic_DNA"/>
</dbReference>
<dbReference type="EMBL" id="CP002685">
    <property type="protein sequence ID" value="AEC10781.1"/>
    <property type="molecule type" value="Genomic_DNA"/>
</dbReference>
<dbReference type="EMBL" id="AY078934">
    <property type="protein sequence ID" value="AAL84940.1"/>
    <property type="molecule type" value="mRNA"/>
</dbReference>
<dbReference type="EMBL" id="AK228456">
    <property type="protein sequence ID" value="BAF00383.1"/>
    <property type="molecule type" value="mRNA"/>
</dbReference>
<dbReference type="PIR" id="T02189">
    <property type="entry name" value="T02189"/>
</dbReference>
<dbReference type="RefSeq" id="NP_182221.1">
    <molecule id="Q0WR66-2"/>
    <property type="nucleotide sequence ID" value="NM_130266.2"/>
</dbReference>
<dbReference type="RefSeq" id="NP_850466.2">
    <molecule id="Q0WR66-1"/>
    <property type="nucleotide sequence ID" value="NM_180135.3"/>
</dbReference>
<dbReference type="SMR" id="Q0WR66"/>
<dbReference type="FunCoup" id="Q0WR66">
    <property type="interactions" value="327"/>
</dbReference>
<dbReference type="STRING" id="3702.Q0WR66"/>
<dbReference type="iPTMnet" id="Q0WR66"/>
<dbReference type="PaxDb" id="3702-AT2G46980.2"/>
<dbReference type="ProteomicsDB" id="246715">
    <molecule id="Q0WR66-1"/>
</dbReference>
<dbReference type="EnsemblPlants" id="AT2G46980.1">
    <molecule id="Q0WR66-2"/>
    <property type="protein sequence ID" value="AT2G46980.1"/>
    <property type="gene ID" value="AT2G46980"/>
</dbReference>
<dbReference type="EnsemblPlants" id="AT2G46980.2">
    <molecule id="Q0WR66-1"/>
    <property type="protein sequence ID" value="AT2G46980.2"/>
    <property type="gene ID" value="AT2G46980"/>
</dbReference>
<dbReference type="GeneID" id="819312"/>
<dbReference type="Gramene" id="AT2G46980.1">
    <molecule id="Q0WR66-2"/>
    <property type="protein sequence ID" value="AT2G46980.1"/>
    <property type="gene ID" value="AT2G46980"/>
</dbReference>
<dbReference type="Gramene" id="AT2G46980.2">
    <molecule id="Q0WR66-1"/>
    <property type="protein sequence ID" value="AT2G46980.2"/>
    <property type="gene ID" value="AT2G46980"/>
</dbReference>
<dbReference type="KEGG" id="ath:AT2G46980"/>
<dbReference type="Araport" id="AT2G46980"/>
<dbReference type="TAIR" id="AT2G46980">
    <property type="gene designation" value="ASY3"/>
</dbReference>
<dbReference type="eggNOG" id="ENOG502R6IY">
    <property type="taxonomic scope" value="Eukaryota"/>
</dbReference>
<dbReference type="InParanoid" id="Q0WR66"/>
<dbReference type="OMA" id="RNHEDIT"/>
<dbReference type="PhylomeDB" id="Q0WR66"/>
<dbReference type="PRO" id="PR:Q0WR66"/>
<dbReference type="Proteomes" id="UP000006548">
    <property type="component" value="Chromosome 2"/>
</dbReference>
<dbReference type="ExpressionAtlas" id="Q0WR66">
    <property type="expression patterns" value="baseline and differential"/>
</dbReference>
<dbReference type="GO" id="GO:0005694">
    <property type="term" value="C:chromosome"/>
    <property type="evidence" value="ECO:0000314"/>
    <property type="project" value="TAIR"/>
</dbReference>
<dbReference type="GO" id="GO:0005730">
    <property type="term" value="C:nucleolus"/>
    <property type="evidence" value="ECO:0000314"/>
    <property type="project" value="TAIR"/>
</dbReference>
<dbReference type="GO" id="GO:0051321">
    <property type="term" value="P:meiotic cell cycle"/>
    <property type="evidence" value="ECO:0000315"/>
    <property type="project" value="TAIR"/>
</dbReference>
<dbReference type="GO" id="GO:0090173">
    <property type="term" value="P:regulation of synaptonemal complex assembly"/>
    <property type="evidence" value="ECO:0000315"/>
    <property type="project" value="UniProtKB"/>
</dbReference>
<dbReference type="InterPro" id="IPR037731">
    <property type="entry name" value="ASY3-like"/>
</dbReference>
<dbReference type="InterPro" id="IPR046845">
    <property type="entry name" value="ASY3-like_CC"/>
</dbReference>
<dbReference type="PANTHER" id="PTHR36027">
    <property type="entry name" value="MEIOSIS-SPECIFIC PROTEIN ASY3"/>
    <property type="match status" value="1"/>
</dbReference>
<dbReference type="PANTHER" id="PTHR36027:SF1">
    <property type="entry name" value="MEIOSIS-SPECIFIC PROTEIN ASY3"/>
    <property type="match status" value="1"/>
</dbReference>
<dbReference type="Pfam" id="PF20435">
    <property type="entry name" value="ASY3-like"/>
    <property type="match status" value="1"/>
</dbReference>
<organism>
    <name type="scientific">Arabidopsis thaliana</name>
    <name type="common">Mouse-ear cress</name>
    <dbReference type="NCBI Taxonomy" id="3702"/>
    <lineage>
        <taxon>Eukaryota</taxon>
        <taxon>Viridiplantae</taxon>
        <taxon>Streptophyta</taxon>
        <taxon>Embryophyta</taxon>
        <taxon>Tracheophyta</taxon>
        <taxon>Spermatophyta</taxon>
        <taxon>Magnoliopsida</taxon>
        <taxon>eudicotyledons</taxon>
        <taxon>Gunneridae</taxon>
        <taxon>Pentapetalae</taxon>
        <taxon>rosids</taxon>
        <taxon>malvids</taxon>
        <taxon>Brassicales</taxon>
        <taxon>Brassicaceae</taxon>
        <taxon>Camelineae</taxon>
        <taxon>Arabidopsis</taxon>
    </lineage>
</organism>
<name>ASY3_ARATH</name>
<gene>
    <name evidence="4" type="primary">ASY3</name>
    <name evidence="6" type="ordered locus">At2g46980</name>
</gene>
<keyword id="KW-0025">Alternative splicing</keyword>
<keyword id="KW-0158">Chromosome</keyword>
<keyword id="KW-0175">Coiled coil</keyword>
<keyword id="KW-0469">Meiosis</keyword>
<keyword id="KW-0539">Nucleus</keyword>
<keyword id="KW-1185">Reference proteome</keyword>
<evidence type="ECO:0000255" key="1"/>
<evidence type="ECO:0000256" key="2">
    <source>
        <dbReference type="SAM" id="MobiDB-lite"/>
    </source>
</evidence>
<evidence type="ECO:0000269" key="3">
    <source>
    </source>
</evidence>
<evidence type="ECO:0000303" key="4">
    <source>
    </source>
</evidence>
<evidence type="ECO:0000305" key="5"/>
<evidence type="ECO:0000312" key="6">
    <source>
        <dbReference type="Araport" id="AT2G46980"/>
    </source>
</evidence>
<reference key="1">
    <citation type="journal article" date="1999" name="Nature">
        <title>Sequence and analysis of chromosome 2 of the plant Arabidopsis thaliana.</title>
        <authorList>
            <person name="Lin X."/>
            <person name="Kaul S."/>
            <person name="Rounsley S.D."/>
            <person name="Shea T.P."/>
            <person name="Benito M.-I."/>
            <person name="Town C.D."/>
            <person name="Fujii C.Y."/>
            <person name="Mason T.M."/>
            <person name="Bowman C.L."/>
            <person name="Barnstead M.E."/>
            <person name="Feldblyum T.V."/>
            <person name="Buell C.R."/>
            <person name="Ketchum K.A."/>
            <person name="Lee J.J."/>
            <person name="Ronning C.M."/>
            <person name="Koo H.L."/>
            <person name="Moffat K.S."/>
            <person name="Cronin L.A."/>
            <person name="Shen M."/>
            <person name="Pai G."/>
            <person name="Van Aken S."/>
            <person name="Umayam L."/>
            <person name="Tallon L.J."/>
            <person name="Gill J.E."/>
            <person name="Adams M.D."/>
            <person name="Carrera A.J."/>
            <person name="Creasy T.H."/>
            <person name="Goodman H.M."/>
            <person name="Somerville C.R."/>
            <person name="Copenhaver G.P."/>
            <person name="Preuss D."/>
            <person name="Nierman W.C."/>
            <person name="White O."/>
            <person name="Eisen J.A."/>
            <person name="Salzberg S.L."/>
            <person name="Fraser C.M."/>
            <person name="Venter J.C."/>
        </authorList>
    </citation>
    <scope>NUCLEOTIDE SEQUENCE [LARGE SCALE GENOMIC DNA]</scope>
    <source>
        <strain>cv. Columbia</strain>
    </source>
</reference>
<reference key="2">
    <citation type="journal article" date="2017" name="Plant J.">
        <title>Araport11: a complete reannotation of the Arabidopsis thaliana reference genome.</title>
        <authorList>
            <person name="Cheng C.Y."/>
            <person name="Krishnakumar V."/>
            <person name="Chan A.P."/>
            <person name="Thibaud-Nissen F."/>
            <person name="Schobel S."/>
            <person name="Town C.D."/>
        </authorList>
    </citation>
    <scope>GENOME REANNOTATION</scope>
    <source>
        <strain>cv. Columbia</strain>
    </source>
</reference>
<reference key="3">
    <citation type="journal article" date="2003" name="Science">
        <title>Empirical analysis of transcriptional activity in the Arabidopsis genome.</title>
        <authorList>
            <person name="Yamada K."/>
            <person name="Lim J."/>
            <person name="Dale J.M."/>
            <person name="Chen H."/>
            <person name="Shinn P."/>
            <person name="Palm C.J."/>
            <person name="Southwick A.M."/>
            <person name="Wu H.C."/>
            <person name="Kim C.J."/>
            <person name="Nguyen M."/>
            <person name="Pham P.K."/>
            <person name="Cheuk R.F."/>
            <person name="Karlin-Newmann G."/>
            <person name="Liu S.X."/>
            <person name="Lam B."/>
            <person name="Sakano H."/>
            <person name="Wu T."/>
            <person name="Yu G."/>
            <person name="Miranda M."/>
            <person name="Quach H.L."/>
            <person name="Tripp M."/>
            <person name="Chang C.H."/>
            <person name="Lee J.M."/>
            <person name="Toriumi M.J."/>
            <person name="Chan M.M."/>
            <person name="Tang C.C."/>
            <person name="Onodera C.S."/>
            <person name="Deng J.M."/>
            <person name="Akiyama K."/>
            <person name="Ansari Y."/>
            <person name="Arakawa T."/>
            <person name="Banh J."/>
            <person name="Banno F."/>
            <person name="Bowser L."/>
            <person name="Brooks S.Y."/>
            <person name="Carninci P."/>
            <person name="Chao Q."/>
            <person name="Choy N."/>
            <person name="Enju A."/>
            <person name="Goldsmith A.D."/>
            <person name="Gurjal M."/>
            <person name="Hansen N.F."/>
            <person name="Hayashizaki Y."/>
            <person name="Johnson-Hopson C."/>
            <person name="Hsuan V.W."/>
            <person name="Iida K."/>
            <person name="Karnes M."/>
            <person name="Khan S."/>
            <person name="Koesema E."/>
            <person name="Ishida J."/>
            <person name="Jiang P.X."/>
            <person name="Jones T."/>
            <person name="Kawai J."/>
            <person name="Kamiya A."/>
            <person name="Meyers C."/>
            <person name="Nakajima M."/>
            <person name="Narusaka M."/>
            <person name="Seki M."/>
            <person name="Sakurai T."/>
            <person name="Satou M."/>
            <person name="Tamse R."/>
            <person name="Vaysberg M."/>
            <person name="Wallender E.K."/>
            <person name="Wong C."/>
            <person name="Yamamura Y."/>
            <person name="Yuan S."/>
            <person name="Shinozaki K."/>
            <person name="Davis R.W."/>
            <person name="Theologis A."/>
            <person name="Ecker J.R."/>
        </authorList>
    </citation>
    <scope>NUCLEOTIDE SEQUENCE [LARGE SCALE MRNA] (ISOFORM 2)</scope>
    <source>
        <strain>cv. Columbia</strain>
    </source>
</reference>
<reference key="4">
    <citation type="submission" date="2006-07" db="EMBL/GenBank/DDBJ databases">
        <title>Large-scale analysis of RIKEN Arabidopsis full-length (RAFL) cDNAs.</title>
        <authorList>
            <person name="Totoki Y."/>
            <person name="Seki M."/>
            <person name="Ishida J."/>
            <person name="Nakajima M."/>
            <person name="Enju A."/>
            <person name="Kamiya A."/>
            <person name="Narusaka M."/>
            <person name="Shin-i T."/>
            <person name="Nakagawa M."/>
            <person name="Sakamoto N."/>
            <person name="Oishi K."/>
            <person name="Kohara Y."/>
            <person name="Kobayashi M."/>
            <person name="Toyoda A."/>
            <person name="Sakaki Y."/>
            <person name="Sakurai T."/>
            <person name="Iida K."/>
            <person name="Akiyama K."/>
            <person name="Satou M."/>
            <person name="Toyoda T."/>
            <person name="Konagaya A."/>
            <person name="Carninci P."/>
            <person name="Kawai J."/>
            <person name="Hayashizaki Y."/>
            <person name="Shinozaki K."/>
        </authorList>
    </citation>
    <scope>NUCLEOTIDE SEQUENCE [LARGE SCALE MRNA] (ISOFORM 1)</scope>
    <source>
        <strain>cv. Columbia</strain>
    </source>
</reference>
<reference key="5">
    <citation type="journal article" date="2012" name="PLoS Genet.">
        <title>Inter-homolog crossing-over and synapsis in Arabidopsis meiosis are dependent on the chromosome axis protein AtASY3.</title>
        <authorList>
            <person name="Ferdous M."/>
            <person name="Higgins J.D."/>
            <person name="Osman K."/>
            <person name="Lambing C."/>
            <person name="Roitinger E."/>
            <person name="Mechtler K."/>
            <person name="Armstrong S.J."/>
            <person name="Perry R."/>
            <person name="Pradillo M."/>
            <person name="Cunado N."/>
            <person name="Franklin F.C."/>
        </authorList>
    </citation>
    <scope>FUNCTION</scope>
    <scope>INTERACTION WITH ASY1</scope>
    <scope>SUBCELLULAR LOCATION</scope>
</reference>
<accession>Q0WR66</accession>
<accession>O80726</accession>
<accession>Q8RY31</accession>